<feature type="chain" id="PRO_0000332427" description="Crossover junction endodeoxyribonuclease RuvC">
    <location>
        <begin position="1"/>
        <end position="180"/>
    </location>
</feature>
<feature type="active site" evidence="1">
    <location>
        <position position="9"/>
    </location>
</feature>
<feature type="active site" evidence="1">
    <location>
        <position position="74"/>
    </location>
</feature>
<feature type="active site" evidence="1">
    <location>
        <position position="146"/>
    </location>
</feature>
<feature type="binding site" evidence="1">
    <location>
        <position position="9"/>
    </location>
    <ligand>
        <name>Mg(2+)</name>
        <dbReference type="ChEBI" id="CHEBI:18420"/>
        <label>1</label>
    </ligand>
</feature>
<feature type="binding site" evidence="1">
    <location>
        <position position="74"/>
    </location>
    <ligand>
        <name>Mg(2+)</name>
        <dbReference type="ChEBI" id="CHEBI:18420"/>
        <label>2</label>
    </ligand>
</feature>
<feature type="binding site" evidence="1">
    <location>
        <position position="146"/>
    </location>
    <ligand>
        <name>Mg(2+)</name>
        <dbReference type="ChEBI" id="CHEBI:18420"/>
        <label>1</label>
    </ligand>
</feature>
<protein>
    <recommendedName>
        <fullName evidence="1">Crossover junction endodeoxyribonuclease RuvC</fullName>
        <ecNumber evidence="1">3.1.21.10</ecNumber>
    </recommendedName>
    <alternativeName>
        <fullName evidence="1">Holliday junction nuclease RuvC</fullName>
    </alternativeName>
    <alternativeName>
        <fullName evidence="1">Holliday junction resolvase RuvC</fullName>
    </alternativeName>
</protein>
<organism>
    <name type="scientific">Methylobacillus flagellatus (strain ATCC 51484 / DSM 6875 / VKM B-1610 / KT)</name>
    <dbReference type="NCBI Taxonomy" id="265072"/>
    <lineage>
        <taxon>Bacteria</taxon>
        <taxon>Pseudomonadati</taxon>
        <taxon>Pseudomonadota</taxon>
        <taxon>Betaproteobacteria</taxon>
        <taxon>Nitrosomonadales</taxon>
        <taxon>Methylophilaceae</taxon>
        <taxon>Methylobacillus</taxon>
    </lineage>
</organism>
<dbReference type="EC" id="3.1.21.10" evidence="1"/>
<dbReference type="EMBL" id="CP000284">
    <property type="protein sequence ID" value="ABE50621.1"/>
    <property type="molecule type" value="Genomic_DNA"/>
</dbReference>
<dbReference type="RefSeq" id="WP_011480574.1">
    <property type="nucleotide sequence ID" value="NC_007947.1"/>
</dbReference>
<dbReference type="SMR" id="Q1GYR6"/>
<dbReference type="STRING" id="265072.Mfla_2354"/>
<dbReference type="KEGG" id="mfa:Mfla_2354"/>
<dbReference type="eggNOG" id="COG0817">
    <property type="taxonomic scope" value="Bacteria"/>
</dbReference>
<dbReference type="HOGENOM" id="CLU_091257_2_0_4"/>
<dbReference type="OrthoDB" id="9805499at2"/>
<dbReference type="Proteomes" id="UP000002440">
    <property type="component" value="Chromosome"/>
</dbReference>
<dbReference type="GO" id="GO:0005737">
    <property type="term" value="C:cytoplasm"/>
    <property type="evidence" value="ECO:0007669"/>
    <property type="project" value="UniProtKB-SubCell"/>
</dbReference>
<dbReference type="GO" id="GO:0048476">
    <property type="term" value="C:Holliday junction resolvase complex"/>
    <property type="evidence" value="ECO:0007669"/>
    <property type="project" value="UniProtKB-UniRule"/>
</dbReference>
<dbReference type="GO" id="GO:0008821">
    <property type="term" value="F:crossover junction DNA endonuclease activity"/>
    <property type="evidence" value="ECO:0007669"/>
    <property type="project" value="UniProtKB-UniRule"/>
</dbReference>
<dbReference type="GO" id="GO:0003677">
    <property type="term" value="F:DNA binding"/>
    <property type="evidence" value="ECO:0007669"/>
    <property type="project" value="UniProtKB-KW"/>
</dbReference>
<dbReference type="GO" id="GO:0000287">
    <property type="term" value="F:magnesium ion binding"/>
    <property type="evidence" value="ECO:0007669"/>
    <property type="project" value="UniProtKB-UniRule"/>
</dbReference>
<dbReference type="GO" id="GO:0006310">
    <property type="term" value="P:DNA recombination"/>
    <property type="evidence" value="ECO:0007669"/>
    <property type="project" value="UniProtKB-UniRule"/>
</dbReference>
<dbReference type="GO" id="GO:0006281">
    <property type="term" value="P:DNA repair"/>
    <property type="evidence" value="ECO:0007669"/>
    <property type="project" value="UniProtKB-UniRule"/>
</dbReference>
<dbReference type="CDD" id="cd16962">
    <property type="entry name" value="RuvC"/>
    <property type="match status" value="1"/>
</dbReference>
<dbReference type="FunFam" id="3.30.420.10:FF:000002">
    <property type="entry name" value="Crossover junction endodeoxyribonuclease RuvC"/>
    <property type="match status" value="1"/>
</dbReference>
<dbReference type="Gene3D" id="3.30.420.10">
    <property type="entry name" value="Ribonuclease H-like superfamily/Ribonuclease H"/>
    <property type="match status" value="1"/>
</dbReference>
<dbReference type="HAMAP" id="MF_00034">
    <property type="entry name" value="RuvC"/>
    <property type="match status" value="1"/>
</dbReference>
<dbReference type="InterPro" id="IPR012337">
    <property type="entry name" value="RNaseH-like_sf"/>
</dbReference>
<dbReference type="InterPro" id="IPR036397">
    <property type="entry name" value="RNaseH_sf"/>
</dbReference>
<dbReference type="InterPro" id="IPR020563">
    <property type="entry name" value="X-over_junc_endoDNase_Mg_BS"/>
</dbReference>
<dbReference type="InterPro" id="IPR002176">
    <property type="entry name" value="X-over_junc_endoDNase_RuvC"/>
</dbReference>
<dbReference type="NCBIfam" id="TIGR00228">
    <property type="entry name" value="ruvC"/>
    <property type="match status" value="1"/>
</dbReference>
<dbReference type="PANTHER" id="PTHR30194">
    <property type="entry name" value="CROSSOVER JUNCTION ENDODEOXYRIBONUCLEASE RUVC"/>
    <property type="match status" value="1"/>
</dbReference>
<dbReference type="PANTHER" id="PTHR30194:SF3">
    <property type="entry name" value="CROSSOVER JUNCTION ENDODEOXYRIBONUCLEASE RUVC"/>
    <property type="match status" value="1"/>
</dbReference>
<dbReference type="Pfam" id="PF02075">
    <property type="entry name" value="RuvC"/>
    <property type="match status" value="1"/>
</dbReference>
<dbReference type="PRINTS" id="PR00696">
    <property type="entry name" value="RSOLVASERUVC"/>
</dbReference>
<dbReference type="SUPFAM" id="SSF53098">
    <property type="entry name" value="Ribonuclease H-like"/>
    <property type="match status" value="1"/>
</dbReference>
<dbReference type="PROSITE" id="PS01321">
    <property type="entry name" value="RUVC"/>
    <property type="match status" value="1"/>
</dbReference>
<gene>
    <name evidence="1" type="primary">ruvC</name>
    <name type="ordered locus">Mfla_2354</name>
</gene>
<proteinExistence type="inferred from homology"/>
<evidence type="ECO:0000255" key="1">
    <source>
        <dbReference type="HAMAP-Rule" id="MF_00034"/>
    </source>
</evidence>
<keyword id="KW-0963">Cytoplasm</keyword>
<keyword id="KW-0227">DNA damage</keyword>
<keyword id="KW-0233">DNA recombination</keyword>
<keyword id="KW-0234">DNA repair</keyword>
<keyword id="KW-0238">DNA-binding</keyword>
<keyword id="KW-0255">Endonuclease</keyword>
<keyword id="KW-0378">Hydrolase</keyword>
<keyword id="KW-0460">Magnesium</keyword>
<keyword id="KW-0479">Metal-binding</keyword>
<keyword id="KW-0540">Nuclease</keyword>
<keyword id="KW-1185">Reference proteome</keyword>
<reference key="1">
    <citation type="submission" date="2006-03" db="EMBL/GenBank/DDBJ databases">
        <title>Complete sequence of Methylobacillus flagellatus KT.</title>
        <authorList>
            <consortium name="US DOE Joint Genome Institute"/>
            <person name="Copeland A."/>
            <person name="Lucas S."/>
            <person name="Lapidus A."/>
            <person name="Barry K."/>
            <person name="Detter J.C."/>
            <person name="Glavina del Rio T."/>
            <person name="Hammon N."/>
            <person name="Israni S."/>
            <person name="Dalin E."/>
            <person name="Tice H."/>
            <person name="Pitluck S."/>
            <person name="Brettin T."/>
            <person name="Bruce D."/>
            <person name="Han C."/>
            <person name="Tapia R."/>
            <person name="Saunders E."/>
            <person name="Gilna P."/>
            <person name="Schmutz J."/>
            <person name="Larimer F."/>
            <person name="Land M."/>
            <person name="Kyrpides N."/>
            <person name="Anderson I."/>
            <person name="Richardson P."/>
        </authorList>
    </citation>
    <scope>NUCLEOTIDE SEQUENCE [LARGE SCALE GENOMIC DNA]</scope>
    <source>
        <strain>ATCC 51484 / DSM 6875 / VKM B-1610 / KT</strain>
    </source>
</reference>
<comment type="function">
    <text evidence="1">The RuvA-RuvB-RuvC complex processes Holliday junction (HJ) DNA during genetic recombination and DNA repair. Endonuclease that resolves HJ intermediates. Cleaves cruciform DNA by making single-stranded nicks across the HJ at symmetrical positions within the homologous arms, yielding a 5'-phosphate and a 3'-hydroxyl group; requires a central core of homology in the junction. The consensus cleavage sequence is 5'-(A/T)TT(C/G)-3'. Cleavage occurs on the 3'-side of the TT dinucleotide at the point of strand exchange. HJ branch migration catalyzed by RuvA-RuvB allows RuvC to scan DNA until it finds its consensus sequence, where it cleaves and resolves the cruciform DNA.</text>
</comment>
<comment type="catalytic activity">
    <reaction evidence="1">
        <text>Endonucleolytic cleavage at a junction such as a reciprocal single-stranded crossover between two homologous DNA duplexes (Holliday junction).</text>
        <dbReference type="EC" id="3.1.21.10"/>
    </reaction>
</comment>
<comment type="cofactor">
    <cofactor evidence="1">
        <name>Mg(2+)</name>
        <dbReference type="ChEBI" id="CHEBI:18420"/>
    </cofactor>
    <text evidence="1">Binds 2 Mg(2+) ion per subunit.</text>
</comment>
<comment type="subunit">
    <text evidence="1">Homodimer which binds Holliday junction (HJ) DNA. The HJ becomes 2-fold symmetrical on binding to RuvC with unstacked arms; it has a different conformation from HJ DNA in complex with RuvA. In the full resolvosome a probable DNA-RuvA(4)-RuvB(12)-RuvC(2) complex forms which resolves the HJ.</text>
</comment>
<comment type="subcellular location">
    <subcellularLocation>
        <location evidence="1">Cytoplasm</location>
    </subcellularLocation>
</comment>
<comment type="similarity">
    <text evidence="1">Belongs to the RuvC family.</text>
</comment>
<sequence length="180" mass="18958">MTFRILGIDPGLRLTGFGVIEKTGEKLAYVASGTIKTTTGKGSEIEDLPTRLKIILDSLAEVIDNYQPQQAAIEKVFVNVNPQSTLLLGQARGAAISALVLQGLPIAEYTALQVKQSVVGHGHAAKDQVQEMVKRLLNLPGLPRPDSADALACAICHAHGGQGLGKLATAGFRVKGGRLI</sequence>
<accession>Q1GYR6</accession>
<name>RUVC_METFK</name>